<dbReference type="EMBL" id="AE000520">
    <property type="protein sequence ID" value="AAC65138.1"/>
    <property type="molecule type" value="Genomic_DNA"/>
</dbReference>
<dbReference type="PIR" id="C71360">
    <property type="entry name" value="C71360"/>
</dbReference>
<dbReference type="STRING" id="243276.TP_0137"/>
<dbReference type="EnsemblBacteria" id="AAC65138">
    <property type="protein sequence ID" value="AAC65138"/>
    <property type="gene ID" value="TP_0137"/>
</dbReference>
<dbReference type="KEGG" id="tpa:TP_0137"/>
<dbReference type="HOGENOM" id="CLU_3206560_0_0_12"/>
<dbReference type="Proteomes" id="UP000000811">
    <property type="component" value="Chromosome"/>
</dbReference>
<accession>O83173</accession>
<proteinExistence type="predicted"/>
<organism>
    <name type="scientific">Treponema pallidum (strain Nichols)</name>
    <dbReference type="NCBI Taxonomy" id="243276"/>
    <lineage>
        <taxon>Bacteria</taxon>
        <taxon>Pseudomonadati</taxon>
        <taxon>Spirochaetota</taxon>
        <taxon>Spirochaetia</taxon>
        <taxon>Spirochaetales</taxon>
        <taxon>Treponemataceae</taxon>
        <taxon>Treponema</taxon>
    </lineage>
</organism>
<gene>
    <name type="ordered locus">TP_0137</name>
</gene>
<keyword id="KW-1185">Reference proteome</keyword>
<name>Y137_TREPA</name>
<reference key="1">
    <citation type="journal article" date="1998" name="Science">
        <title>Complete genome sequence of Treponema pallidum, the syphilis spirochete.</title>
        <authorList>
            <person name="Fraser C.M."/>
            <person name="Norris S.J."/>
            <person name="Weinstock G.M."/>
            <person name="White O."/>
            <person name="Sutton G.G."/>
            <person name="Dodson R.J."/>
            <person name="Gwinn M.L."/>
            <person name="Hickey E.K."/>
            <person name="Clayton R.A."/>
            <person name="Ketchum K.A."/>
            <person name="Sodergren E."/>
            <person name="Hardham J.M."/>
            <person name="McLeod M.P."/>
            <person name="Salzberg S.L."/>
            <person name="Peterson J.D."/>
            <person name="Khalak H.G."/>
            <person name="Richardson D.L."/>
            <person name="Howell J.K."/>
            <person name="Chidambaram M."/>
            <person name="Utterback T.R."/>
            <person name="McDonald L.A."/>
            <person name="Artiach P."/>
            <person name="Bowman C."/>
            <person name="Cotton M.D."/>
            <person name="Fujii C."/>
            <person name="Garland S.A."/>
            <person name="Hatch B."/>
            <person name="Horst K."/>
            <person name="Roberts K.M."/>
            <person name="Sandusky M."/>
            <person name="Weidman J.F."/>
            <person name="Smith H.O."/>
            <person name="Venter J.C."/>
        </authorList>
    </citation>
    <scope>NUCLEOTIDE SEQUENCE [LARGE SCALE GENOMIC DNA]</scope>
    <source>
        <strain>Nichols</strain>
    </source>
</reference>
<protein>
    <recommendedName>
        <fullName>Uncharacterized protein TP_0137</fullName>
    </recommendedName>
</protein>
<feature type="chain" id="PRO_0000202198" description="Uncharacterized protein TP_0137">
    <location>
        <begin position="1"/>
        <end position="45"/>
    </location>
</feature>
<sequence length="45" mass="4802">MLLEPRVTGCFLSSSEQALPPAIYFPLLLLLRSGARNIVGITSVG</sequence>